<proteinExistence type="inferred from homology"/>
<name>RLMD_SHISS</name>
<keyword id="KW-0004">4Fe-4S</keyword>
<keyword id="KW-0408">Iron</keyword>
<keyword id="KW-0411">Iron-sulfur</keyword>
<keyword id="KW-0479">Metal-binding</keyword>
<keyword id="KW-0489">Methyltransferase</keyword>
<keyword id="KW-1185">Reference proteome</keyword>
<keyword id="KW-0698">rRNA processing</keyword>
<keyword id="KW-0949">S-adenosyl-L-methionine</keyword>
<keyword id="KW-0808">Transferase</keyword>
<feature type="initiator methionine" description="Removed" evidence="1">
    <location>
        <position position="1"/>
    </location>
</feature>
<feature type="chain" id="PRO_0000229885" description="23S rRNA (uracil(1939)-C(5))-methyltransferase RlmD">
    <location>
        <begin position="2"/>
        <end position="433"/>
    </location>
</feature>
<feature type="domain" description="TRAM" evidence="2">
    <location>
        <begin position="10"/>
        <end position="68"/>
    </location>
</feature>
<feature type="active site" description="Nucleophile" evidence="2">
    <location>
        <position position="389"/>
    </location>
</feature>
<feature type="binding site" evidence="2">
    <location>
        <position position="81"/>
    </location>
    <ligand>
        <name>[4Fe-4S] cluster</name>
        <dbReference type="ChEBI" id="CHEBI:49883"/>
    </ligand>
</feature>
<feature type="binding site" evidence="2">
    <location>
        <position position="87"/>
    </location>
    <ligand>
        <name>[4Fe-4S] cluster</name>
        <dbReference type="ChEBI" id="CHEBI:49883"/>
    </ligand>
</feature>
<feature type="binding site" evidence="2">
    <location>
        <position position="90"/>
    </location>
    <ligand>
        <name>[4Fe-4S] cluster</name>
        <dbReference type="ChEBI" id="CHEBI:49883"/>
    </ligand>
</feature>
<feature type="binding site" evidence="2">
    <location>
        <position position="162"/>
    </location>
    <ligand>
        <name>[4Fe-4S] cluster</name>
        <dbReference type="ChEBI" id="CHEBI:49883"/>
    </ligand>
</feature>
<feature type="binding site" evidence="2">
    <location>
        <position position="265"/>
    </location>
    <ligand>
        <name>S-adenosyl-L-methionine</name>
        <dbReference type="ChEBI" id="CHEBI:59789"/>
    </ligand>
</feature>
<feature type="binding site" evidence="2">
    <location>
        <position position="294"/>
    </location>
    <ligand>
        <name>S-adenosyl-L-methionine</name>
        <dbReference type="ChEBI" id="CHEBI:59789"/>
    </ligand>
</feature>
<feature type="binding site" evidence="2">
    <location>
        <position position="299"/>
    </location>
    <ligand>
        <name>S-adenosyl-L-methionine</name>
        <dbReference type="ChEBI" id="CHEBI:59789"/>
    </ligand>
</feature>
<feature type="binding site" evidence="2">
    <location>
        <position position="315"/>
    </location>
    <ligand>
        <name>S-adenosyl-L-methionine</name>
        <dbReference type="ChEBI" id="CHEBI:59789"/>
    </ligand>
</feature>
<feature type="binding site" evidence="2">
    <location>
        <position position="342"/>
    </location>
    <ligand>
        <name>S-adenosyl-L-methionine</name>
        <dbReference type="ChEBI" id="CHEBI:59789"/>
    </ligand>
</feature>
<feature type="binding site" evidence="2">
    <location>
        <position position="363"/>
    </location>
    <ligand>
        <name>S-adenosyl-L-methionine</name>
        <dbReference type="ChEBI" id="CHEBI:59789"/>
    </ligand>
</feature>
<gene>
    <name evidence="2" type="primary">rlmD</name>
    <name type="synonym">rumA</name>
    <name type="ordered locus">SSON_2942</name>
</gene>
<protein>
    <recommendedName>
        <fullName evidence="2">23S rRNA (uracil(1939)-C(5))-methyltransferase RlmD</fullName>
        <ecNumber evidence="2">2.1.1.190</ecNumber>
    </recommendedName>
    <alternativeName>
        <fullName evidence="2">23S rRNA(m5U1939)-methyltransferase</fullName>
    </alternativeName>
</protein>
<accession>Q3YY71</accession>
<comment type="function">
    <text evidence="2">Catalyzes the formation of 5-methyl-uridine at position 1939 (m5U1939) in 23S rRNA.</text>
</comment>
<comment type="catalytic activity">
    <reaction evidence="2">
        <text>uridine(1939) in 23S rRNA + S-adenosyl-L-methionine = 5-methyluridine(1939) in 23S rRNA + S-adenosyl-L-homocysteine + H(+)</text>
        <dbReference type="Rhea" id="RHEA:42908"/>
        <dbReference type="Rhea" id="RHEA-COMP:10278"/>
        <dbReference type="Rhea" id="RHEA-COMP:10279"/>
        <dbReference type="ChEBI" id="CHEBI:15378"/>
        <dbReference type="ChEBI" id="CHEBI:57856"/>
        <dbReference type="ChEBI" id="CHEBI:59789"/>
        <dbReference type="ChEBI" id="CHEBI:65315"/>
        <dbReference type="ChEBI" id="CHEBI:74447"/>
        <dbReference type="EC" id="2.1.1.190"/>
    </reaction>
</comment>
<comment type="similarity">
    <text evidence="2">Belongs to the class I-like SAM-binding methyltransferase superfamily. RNA M5U methyltransferase family. RlmD subfamily.</text>
</comment>
<reference key="1">
    <citation type="journal article" date="2005" name="Nucleic Acids Res.">
        <title>Genome dynamics and diversity of Shigella species, the etiologic agents of bacillary dysentery.</title>
        <authorList>
            <person name="Yang F."/>
            <person name="Yang J."/>
            <person name="Zhang X."/>
            <person name="Chen L."/>
            <person name="Jiang Y."/>
            <person name="Yan Y."/>
            <person name="Tang X."/>
            <person name="Wang J."/>
            <person name="Xiong Z."/>
            <person name="Dong J."/>
            <person name="Xue Y."/>
            <person name="Zhu Y."/>
            <person name="Xu X."/>
            <person name="Sun L."/>
            <person name="Chen S."/>
            <person name="Nie H."/>
            <person name="Peng J."/>
            <person name="Xu J."/>
            <person name="Wang Y."/>
            <person name="Yuan Z."/>
            <person name="Wen Y."/>
            <person name="Yao Z."/>
            <person name="Shen Y."/>
            <person name="Qiang B."/>
            <person name="Hou Y."/>
            <person name="Yu J."/>
            <person name="Jin Q."/>
        </authorList>
    </citation>
    <scope>NUCLEOTIDE SEQUENCE [LARGE SCALE GENOMIC DNA]</scope>
    <source>
        <strain>Ss046</strain>
    </source>
</reference>
<sequence length="433" mass="48025">MAQFYSAKRRTTTRQIITVSVNDLDSFGQGVARHNGKTLFIPGLLPQENAEVTVTEDKKQYARAKVVRRLSDSPGRETPRCPHFGVCGGCQQQHASVDLQQRSKSAALARLMKHEVSEVIADVPWGYRRRARLSLNYLPKTQQLQMGFRKAGSSDIVDVKQCPILVPQLEALLPKVMACLGSLQVMRHLGHVELVQATSGTLMILRHTAPLSSADREKLERFSHSEGLDLYLAPDSEILETVSGEMPWYDSNGLRLTFSPRDFIQVNAGVNQKMVARALEWLDVQPEDRVLDLFCGMGNFTLPLATQAASVVGVEGVPALVEKGQQNARLNGLQNVTFYHENLEEDVTKQPWAKNGFDKVLLDPARAGAAGVMQQIIKLEPIRIVYVSCNPATLARDSEALLKAGYTIARLAMLDMFPHTGHLESMVLFSRVK</sequence>
<evidence type="ECO:0000250" key="1"/>
<evidence type="ECO:0000255" key="2">
    <source>
        <dbReference type="HAMAP-Rule" id="MF_01010"/>
    </source>
</evidence>
<organism>
    <name type="scientific">Shigella sonnei (strain Ss046)</name>
    <dbReference type="NCBI Taxonomy" id="300269"/>
    <lineage>
        <taxon>Bacteria</taxon>
        <taxon>Pseudomonadati</taxon>
        <taxon>Pseudomonadota</taxon>
        <taxon>Gammaproteobacteria</taxon>
        <taxon>Enterobacterales</taxon>
        <taxon>Enterobacteriaceae</taxon>
        <taxon>Shigella</taxon>
    </lineage>
</organism>
<dbReference type="EC" id="2.1.1.190" evidence="2"/>
<dbReference type="EMBL" id="CP000038">
    <property type="protein sequence ID" value="AAZ89541.1"/>
    <property type="molecule type" value="Genomic_DNA"/>
</dbReference>
<dbReference type="RefSeq" id="WP_000046832.1">
    <property type="nucleotide sequence ID" value="NC_007384.1"/>
</dbReference>
<dbReference type="SMR" id="Q3YY71"/>
<dbReference type="GeneID" id="93779213"/>
<dbReference type="KEGG" id="ssn:SSON_2942"/>
<dbReference type="HOGENOM" id="CLU_014689_8_2_6"/>
<dbReference type="Proteomes" id="UP000002529">
    <property type="component" value="Chromosome"/>
</dbReference>
<dbReference type="GO" id="GO:0051539">
    <property type="term" value="F:4 iron, 4 sulfur cluster binding"/>
    <property type="evidence" value="ECO:0007669"/>
    <property type="project" value="UniProtKB-KW"/>
</dbReference>
<dbReference type="GO" id="GO:0005506">
    <property type="term" value="F:iron ion binding"/>
    <property type="evidence" value="ECO:0007669"/>
    <property type="project" value="UniProtKB-UniRule"/>
</dbReference>
<dbReference type="GO" id="GO:0003723">
    <property type="term" value="F:RNA binding"/>
    <property type="evidence" value="ECO:0007669"/>
    <property type="project" value="InterPro"/>
</dbReference>
<dbReference type="GO" id="GO:0070041">
    <property type="term" value="F:rRNA (uridine-C5-)-methyltransferase activity"/>
    <property type="evidence" value="ECO:0007669"/>
    <property type="project" value="UniProtKB-UniRule"/>
</dbReference>
<dbReference type="GO" id="GO:0070475">
    <property type="term" value="P:rRNA base methylation"/>
    <property type="evidence" value="ECO:0007669"/>
    <property type="project" value="TreeGrafter"/>
</dbReference>
<dbReference type="CDD" id="cd02440">
    <property type="entry name" value="AdoMet_MTases"/>
    <property type="match status" value="1"/>
</dbReference>
<dbReference type="FunFam" id="3.40.50.150:FF:000009">
    <property type="entry name" value="23S rRNA (Uracil(1939)-C(5))-methyltransferase RlmD"/>
    <property type="match status" value="1"/>
</dbReference>
<dbReference type="FunFam" id="2.40.50.1070:FF:000004">
    <property type="entry name" value="23S rRNA (uracil(1939)-C(5))-methyltransferase RlmD"/>
    <property type="match status" value="1"/>
</dbReference>
<dbReference type="FunFam" id="2.40.50.140:FF:000097">
    <property type="entry name" value="23S rRNA (uracil(1939)-C(5))-methyltransferase RlmD"/>
    <property type="match status" value="1"/>
</dbReference>
<dbReference type="Gene3D" id="2.40.50.1070">
    <property type="match status" value="1"/>
</dbReference>
<dbReference type="Gene3D" id="2.40.50.140">
    <property type="entry name" value="Nucleic acid-binding proteins"/>
    <property type="match status" value="1"/>
</dbReference>
<dbReference type="Gene3D" id="3.40.50.150">
    <property type="entry name" value="Vaccinia Virus protein VP39"/>
    <property type="match status" value="1"/>
</dbReference>
<dbReference type="HAMAP" id="MF_01010">
    <property type="entry name" value="23SrRNA_methyltr_RlmD"/>
    <property type="match status" value="1"/>
</dbReference>
<dbReference type="InterPro" id="IPR001566">
    <property type="entry name" value="23S_rRNA_MeTrfase_RlmD"/>
</dbReference>
<dbReference type="InterPro" id="IPR030390">
    <property type="entry name" value="MeTrfase_TrmA_AS"/>
</dbReference>
<dbReference type="InterPro" id="IPR030391">
    <property type="entry name" value="MeTrfase_TrmA_CS"/>
</dbReference>
<dbReference type="InterPro" id="IPR012340">
    <property type="entry name" value="NA-bd_OB-fold"/>
</dbReference>
<dbReference type="InterPro" id="IPR029063">
    <property type="entry name" value="SAM-dependent_MTases_sf"/>
</dbReference>
<dbReference type="InterPro" id="IPR002792">
    <property type="entry name" value="TRAM_dom"/>
</dbReference>
<dbReference type="InterPro" id="IPR010280">
    <property type="entry name" value="U5_MeTrfase_fam"/>
</dbReference>
<dbReference type="NCBIfam" id="NF009639">
    <property type="entry name" value="PRK13168.1"/>
    <property type="match status" value="1"/>
</dbReference>
<dbReference type="NCBIfam" id="TIGR00479">
    <property type="entry name" value="rumA"/>
    <property type="match status" value="1"/>
</dbReference>
<dbReference type="PANTHER" id="PTHR11061:SF49">
    <property type="entry name" value="23S RRNA (URACIL(1939)-C(5))-METHYLTRANSFERASE RLMD"/>
    <property type="match status" value="1"/>
</dbReference>
<dbReference type="PANTHER" id="PTHR11061">
    <property type="entry name" value="RNA M5U METHYLTRANSFERASE"/>
    <property type="match status" value="1"/>
</dbReference>
<dbReference type="Pfam" id="PF01938">
    <property type="entry name" value="TRAM"/>
    <property type="match status" value="1"/>
</dbReference>
<dbReference type="Pfam" id="PF05958">
    <property type="entry name" value="tRNA_U5-meth_tr"/>
    <property type="match status" value="1"/>
</dbReference>
<dbReference type="SUPFAM" id="SSF50249">
    <property type="entry name" value="Nucleic acid-binding proteins"/>
    <property type="match status" value="1"/>
</dbReference>
<dbReference type="SUPFAM" id="SSF53335">
    <property type="entry name" value="S-adenosyl-L-methionine-dependent methyltransferases"/>
    <property type="match status" value="1"/>
</dbReference>
<dbReference type="PROSITE" id="PS51687">
    <property type="entry name" value="SAM_MT_RNA_M5U"/>
    <property type="match status" value="1"/>
</dbReference>
<dbReference type="PROSITE" id="PS50926">
    <property type="entry name" value="TRAM"/>
    <property type="match status" value="1"/>
</dbReference>
<dbReference type="PROSITE" id="PS01230">
    <property type="entry name" value="TRMA_1"/>
    <property type="match status" value="1"/>
</dbReference>
<dbReference type="PROSITE" id="PS01231">
    <property type="entry name" value="TRMA_2"/>
    <property type="match status" value="1"/>
</dbReference>